<feature type="chain" id="PRO_0000390371" description="Nucleoprotein">
    <location>
        <begin position="1"/>
        <end position="394"/>
    </location>
</feature>
<feature type="region of interest" description="Disordered" evidence="2">
    <location>
        <begin position="131"/>
        <end position="153"/>
    </location>
</feature>
<feature type="compositionally biased region" description="Polar residues" evidence="2">
    <location>
        <begin position="136"/>
        <end position="153"/>
    </location>
</feature>
<organism>
    <name type="scientific">Avian metapneumovirus (isolate Canada goose/Minnesota/15a/2001)</name>
    <name type="common">AMPV</name>
    <dbReference type="NCBI Taxonomy" id="652954"/>
    <lineage>
        <taxon>Viruses</taxon>
        <taxon>Riboviria</taxon>
        <taxon>Orthornavirae</taxon>
        <taxon>Negarnaviricota</taxon>
        <taxon>Haploviricotina</taxon>
        <taxon>Monjiviricetes</taxon>
        <taxon>Mononegavirales</taxon>
        <taxon>Pneumoviridae</taxon>
        <taxon>Metapneumovirus</taxon>
        <taxon>Metapneumovirus avis</taxon>
    </lineage>
</organism>
<name>NCAP_AMPV1</name>
<organismHost>
    <name type="scientific">Anser sp.</name>
    <name type="common">goose</name>
    <dbReference type="NCBI Taxonomy" id="8847"/>
</organismHost>
<organismHost>
    <name type="scientific">Meleagris gallopavo</name>
    <name type="common">Wild turkey</name>
    <dbReference type="NCBI Taxonomy" id="9103"/>
</organismHost>
<proteinExistence type="inferred from homology"/>
<sequence>MSLQGIQLSDLSYKHAILKESQYTIKRDVGTTPAVTPSSLQREVSLLCGEILYAKHTDYSHAAEVGMQYVSTTLGAERTQQILKNSGSEVQAVLTKTYSLGKGKNSKGEELQMLDIHGVEKSWVEEVDKEARKTMASATKDNSGPIPQNQRPSSPDAPIILLCIGALIFTKPASTIEVGLETAVRRANRVLNDALKRFPRIDIPKIARSFYDLFEQKVYYRSLFIEYGKALGSSSTGSKAESLFVNIFMQAYGAGQTMLRWGAIARSSNNIMLGHVSVQAELKQVTEVYDLVREMGPESGLLHLRQSPKAGLLSLANCPNFASVVLGNASGLGILGMYRGRVPNTELFAAAESYARSLKESNKINFSSLGLTEEEKEAAENFLNINEEGQNDYE</sequence>
<protein>
    <recommendedName>
        <fullName>Nucleoprotein</fullName>
        <shortName>Protein N</shortName>
    </recommendedName>
    <alternativeName>
        <fullName>Nucleocapsid protein</fullName>
    </alternativeName>
</protein>
<comment type="function">
    <text evidence="1">Encapsidates the viral RNA genome by forming a left-handed helical nucleocapsid that protects the RNA from nucleases. RNA replication depends on the availability of soluble nucleoprotein. The encapsidated genomic RNA is termed the NC and serves as template for transcription and replication.</text>
</comment>
<comment type="subunit">
    <text evidence="1">Homomultimerizes to form the nucleocapsid. Binds to viral genomic RNA. Interacts with the phosphoprotein P. When in a monomeric RNA-free form, interacts with the phosphoprotein (via N-terminus). Interacts with protein M2-1; this interaction allows the association of nucleocapsid with the matrix protein.</text>
</comment>
<comment type="subcellular location">
    <subcellularLocation>
        <location evidence="1">Virion</location>
    </subcellularLocation>
    <subcellularLocation>
        <location evidence="1">Host cytoplasm</location>
    </subcellularLocation>
    <text evidence="1">Localizes in cytoplasmic inclusion bodies.</text>
</comment>
<comment type="similarity">
    <text evidence="3">Belongs to the paramyxoviruses nucleocapsid family.</text>
</comment>
<accession>Q2Y2M6</accession>
<dbReference type="EMBL" id="DQ009484">
    <property type="protein sequence ID" value="AAY81654.1"/>
    <property type="molecule type" value="Viral_cRNA"/>
</dbReference>
<dbReference type="RefSeq" id="YP_443837.1">
    <property type="nucleotide sequence ID" value="NC_007652.1"/>
</dbReference>
<dbReference type="SMR" id="Q2Y2M6"/>
<dbReference type="Proteomes" id="UP000002471">
    <property type="component" value="Segment"/>
</dbReference>
<dbReference type="GO" id="GO:0019029">
    <property type="term" value="C:helical viral capsid"/>
    <property type="evidence" value="ECO:0007669"/>
    <property type="project" value="UniProtKB-KW"/>
</dbReference>
<dbReference type="GO" id="GO:0030430">
    <property type="term" value="C:host cell cytoplasm"/>
    <property type="evidence" value="ECO:0007669"/>
    <property type="project" value="UniProtKB-SubCell"/>
</dbReference>
<dbReference type="GO" id="GO:1990904">
    <property type="term" value="C:ribonucleoprotein complex"/>
    <property type="evidence" value="ECO:0007669"/>
    <property type="project" value="UniProtKB-KW"/>
</dbReference>
<dbReference type="GO" id="GO:0019013">
    <property type="term" value="C:viral nucleocapsid"/>
    <property type="evidence" value="ECO:0007669"/>
    <property type="project" value="UniProtKB-KW"/>
</dbReference>
<dbReference type="GO" id="GO:0003723">
    <property type="term" value="F:RNA binding"/>
    <property type="evidence" value="ECO:0007669"/>
    <property type="project" value="UniProtKB-KW"/>
</dbReference>
<dbReference type="InterPro" id="IPR004930">
    <property type="entry name" value="Pneumo_ncap"/>
</dbReference>
<dbReference type="Pfam" id="PF03246">
    <property type="entry name" value="Pneumo_ncap"/>
    <property type="match status" value="1"/>
</dbReference>
<evidence type="ECO:0000250" key="1">
    <source>
        <dbReference type="UniProtKB" id="P03418"/>
    </source>
</evidence>
<evidence type="ECO:0000256" key="2">
    <source>
        <dbReference type="SAM" id="MobiDB-lite"/>
    </source>
</evidence>
<evidence type="ECO:0000305" key="3"/>
<gene>
    <name type="primary">N</name>
</gene>
<reference key="1">
    <citation type="journal article" date="2004" name="Avian Dis.">
        <title>Evidence of avian pneumovirus spread beyond Minnesota among wild and domestic birds in central North America.</title>
        <authorList>
            <person name="Bennett R.S."/>
            <person name="Nezworski J."/>
            <person name="Velayudhan B.T."/>
            <person name="Nagaraja K.V."/>
            <person name="Zeman D.H."/>
            <person name="Dyer N."/>
            <person name="Graham T."/>
            <person name="Lauer D.C."/>
            <person name="Njenga M.K."/>
            <person name="Halvorson D.A."/>
        </authorList>
    </citation>
    <scope>NUCLEOTIDE SEQUENCE [GENOMIC RNA]</scope>
</reference>
<reference key="2">
    <citation type="journal article" date="2005" name="J. Virol.">
        <title>A wild goose metapneumovirus containing a large attachment glycoprotein is avirulent but immunoprotective in domestic turkeys.</title>
        <authorList>
            <person name="Bennett R.S."/>
            <person name="LaRue R."/>
            <person name="Shaw D."/>
            <person name="Yu Q."/>
            <person name="Nagaraja K.V."/>
            <person name="Halvorson D.A."/>
            <person name="Njenga M.K."/>
        </authorList>
    </citation>
    <scope>NUCLEOTIDE SEQUENCE [GENOMIC RNA]</scope>
</reference>
<reference key="3">
    <citation type="journal article" date="2005" name="Virol. J.">
        <title>Identification of a truncated nucleoprotein in avian metapneumovirus-infected cells encoded by a second AUG, in-frame to the full-length gene.</title>
        <authorList>
            <person name="Alvarez R."/>
            <person name="Seal B.S."/>
        </authorList>
    </citation>
    <scope>ALTERNATIVE INITIATION</scope>
    <source>
        <strain>Isolate Meleagris gallopavo/United States/Colorado/1996</strain>
    </source>
</reference>
<keyword id="KW-0167">Capsid protein</keyword>
<keyword id="KW-1139">Helical capsid protein</keyword>
<keyword id="KW-1035">Host cytoplasm</keyword>
<keyword id="KW-1185">Reference proteome</keyword>
<keyword id="KW-0687">Ribonucleoprotein</keyword>
<keyword id="KW-0694">RNA-binding</keyword>
<keyword id="KW-0543">Viral nucleoprotein</keyword>
<keyword id="KW-0946">Virion</keyword>